<evidence type="ECO:0000255" key="1">
    <source>
        <dbReference type="HAMAP-Rule" id="MF_00295"/>
    </source>
</evidence>
<feature type="chain" id="PRO_1000021808" description="Homoserine O-acetyltransferase">
    <location>
        <begin position="1"/>
        <end position="302"/>
    </location>
</feature>
<feature type="active site" description="Acyl-thioester intermediate" evidence="1">
    <location>
        <position position="142"/>
    </location>
</feature>
<feature type="active site" description="Proton acceptor" evidence="1">
    <location>
        <position position="235"/>
    </location>
</feature>
<feature type="active site" evidence="1">
    <location>
        <position position="237"/>
    </location>
</feature>
<feature type="binding site" evidence="1">
    <location>
        <position position="163"/>
    </location>
    <ligand>
        <name>substrate</name>
    </ligand>
</feature>
<feature type="binding site" evidence="1">
    <location>
        <position position="192"/>
    </location>
    <ligand>
        <name>substrate</name>
    </ligand>
</feature>
<feature type="binding site" evidence="1">
    <location>
        <position position="249"/>
    </location>
    <ligand>
        <name>substrate</name>
    </ligand>
</feature>
<feature type="site" description="Important for acyl-CoA specificity" evidence="1">
    <location>
        <position position="111"/>
    </location>
</feature>
<feature type="site" description="Important for substrate specificity" evidence="1">
    <location>
        <position position="192"/>
    </location>
</feature>
<reference key="1">
    <citation type="journal article" date="2006" name="Nat. Biotechnol.">
        <title>The genome and transcriptomes of the anti-tumor agent Clostridium novyi-NT.</title>
        <authorList>
            <person name="Bettegowda C."/>
            <person name="Huang X."/>
            <person name="Lin J."/>
            <person name="Cheong I."/>
            <person name="Kohli M."/>
            <person name="Szabo S.A."/>
            <person name="Zhang X."/>
            <person name="Diaz L.A. Jr."/>
            <person name="Velculescu V.E."/>
            <person name="Parmigiani G."/>
            <person name="Kinzler K.W."/>
            <person name="Vogelstein B."/>
            <person name="Zhou S."/>
        </authorList>
    </citation>
    <scope>NUCLEOTIDE SEQUENCE [LARGE SCALE GENOMIC DNA]</scope>
    <source>
        <strain>NT</strain>
    </source>
</reference>
<dbReference type="EC" id="2.3.1.31" evidence="1"/>
<dbReference type="EMBL" id="CP000382">
    <property type="protein sequence ID" value="ABK61526.1"/>
    <property type="molecule type" value="Genomic_DNA"/>
</dbReference>
<dbReference type="SMR" id="A0PY42"/>
<dbReference type="STRING" id="386415.NT01CX_1211"/>
<dbReference type="KEGG" id="cno:NT01CX_1211"/>
<dbReference type="eggNOG" id="COG1897">
    <property type="taxonomic scope" value="Bacteria"/>
</dbReference>
<dbReference type="HOGENOM" id="CLU_057851_0_1_9"/>
<dbReference type="UniPathway" id="UPA00051">
    <property type="reaction ID" value="UER00074"/>
</dbReference>
<dbReference type="Proteomes" id="UP000008220">
    <property type="component" value="Chromosome"/>
</dbReference>
<dbReference type="GO" id="GO:0005737">
    <property type="term" value="C:cytoplasm"/>
    <property type="evidence" value="ECO:0007669"/>
    <property type="project" value="UniProtKB-SubCell"/>
</dbReference>
<dbReference type="GO" id="GO:0004414">
    <property type="term" value="F:homoserine O-acetyltransferase activity"/>
    <property type="evidence" value="ECO:0007669"/>
    <property type="project" value="UniProtKB-EC"/>
</dbReference>
<dbReference type="GO" id="GO:0008899">
    <property type="term" value="F:homoserine O-succinyltransferase activity"/>
    <property type="evidence" value="ECO:0007669"/>
    <property type="project" value="UniProtKB-UniRule"/>
</dbReference>
<dbReference type="GO" id="GO:0019281">
    <property type="term" value="P:L-methionine biosynthetic process from homoserine via O-succinyl-L-homoserine and cystathionine"/>
    <property type="evidence" value="ECO:0007669"/>
    <property type="project" value="InterPro"/>
</dbReference>
<dbReference type="CDD" id="cd03131">
    <property type="entry name" value="GATase1_HTS"/>
    <property type="match status" value="1"/>
</dbReference>
<dbReference type="FunFam" id="3.40.50.880:FF:000004">
    <property type="entry name" value="Homoserine O-succinyltransferase"/>
    <property type="match status" value="1"/>
</dbReference>
<dbReference type="Gene3D" id="3.40.50.880">
    <property type="match status" value="1"/>
</dbReference>
<dbReference type="HAMAP" id="MF_00295">
    <property type="entry name" value="MetA_acyltransf"/>
    <property type="match status" value="1"/>
</dbReference>
<dbReference type="InterPro" id="IPR029062">
    <property type="entry name" value="Class_I_gatase-like"/>
</dbReference>
<dbReference type="InterPro" id="IPR005697">
    <property type="entry name" value="HST_MetA"/>
</dbReference>
<dbReference type="InterPro" id="IPR033752">
    <property type="entry name" value="MetA_family"/>
</dbReference>
<dbReference type="NCBIfam" id="TIGR01001">
    <property type="entry name" value="metA"/>
    <property type="match status" value="1"/>
</dbReference>
<dbReference type="PANTHER" id="PTHR20919">
    <property type="entry name" value="HOMOSERINE O-SUCCINYLTRANSFERASE"/>
    <property type="match status" value="1"/>
</dbReference>
<dbReference type="PANTHER" id="PTHR20919:SF0">
    <property type="entry name" value="HOMOSERINE O-SUCCINYLTRANSFERASE"/>
    <property type="match status" value="1"/>
</dbReference>
<dbReference type="Pfam" id="PF04204">
    <property type="entry name" value="HTS"/>
    <property type="match status" value="1"/>
</dbReference>
<dbReference type="PIRSF" id="PIRSF000450">
    <property type="entry name" value="H_ser_succinyltr"/>
    <property type="match status" value="1"/>
</dbReference>
<dbReference type="SUPFAM" id="SSF52317">
    <property type="entry name" value="Class I glutamine amidotransferase-like"/>
    <property type="match status" value="1"/>
</dbReference>
<protein>
    <recommendedName>
        <fullName evidence="1">Homoserine O-acetyltransferase</fullName>
        <shortName evidence="1">HAT</shortName>
        <ecNumber evidence="1">2.3.1.31</ecNumber>
    </recommendedName>
    <alternativeName>
        <fullName evidence="1">Homoserine transacetylase</fullName>
        <shortName evidence="1">HTA</shortName>
    </alternativeName>
</protein>
<accession>A0PY42</accession>
<comment type="function">
    <text evidence="1">Transfers an acetyl group from acetyl-CoA to L-homoserine, forming acetyl-L-homoserine.</text>
</comment>
<comment type="catalytic activity">
    <reaction evidence="1">
        <text>L-homoserine + acetyl-CoA = O-acetyl-L-homoserine + CoA</text>
        <dbReference type="Rhea" id="RHEA:13701"/>
        <dbReference type="ChEBI" id="CHEBI:57287"/>
        <dbReference type="ChEBI" id="CHEBI:57288"/>
        <dbReference type="ChEBI" id="CHEBI:57476"/>
        <dbReference type="ChEBI" id="CHEBI:57716"/>
        <dbReference type="EC" id="2.3.1.31"/>
    </reaction>
</comment>
<comment type="pathway">
    <text evidence="1">Amino-acid biosynthesis; L-methionine biosynthesis via de novo pathway; O-acetyl-L-homoserine from L-homoserine: step 1/1.</text>
</comment>
<comment type="subcellular location">
    <subcellularLocation>
        <location evidence="1">Cytoplasm</location>
    </subcellularLocation>
</comment>
<comment type="similarity">
    <text evidence="1">Belongs to the MetA family.</text>
</comment>
<gene>
    <name evidence="1" type="primary">metAA</name>
    <name type="ordered locus">NT01CX_1211</name>
</gene>
<name>METAA_CLONN</name>
<proteinExistence type="inferred from homology"/>
<sequence length="302" mass="35387">MPIIIPENLPASNTLTGENIFVMHEARALSQDIRPLKILILNLMPQKIQTETQLLRLLGNTPLQVDVRLLHIESHESKNTSKEHLLRFYETFDDVKDEKFDGMIITGAPVETLEYEEVDYWEELKRIMEFSVTNVTSTLHICWGAQAGLYYHYGIPKHRLKKKMFGVFKHTLNKDGVKLLRGFDNEFYVPHSRHTEVLREDILKIPELKILSESEESGLYIVATKEAKQIFVMGHSEYDPGSLKWEYDRDSAKGMDIDVPKNYYPNDDPTKEPIVRWRSHANLLFSNWLNYYVYQETPYEHK</sequence>
<keyword id="KW-0012">Acyltransferase</keyword>
<keyword id="KW-0028">Amino-acid biosynthesis</keyword>
<keyword id="KW-0963">Cytoplasm</keyword>
<keyword id="KW-0486">Methionine biosynthesis</keyword>
<keyword id="KW-1185">Reference proteome</keyword>
<keyword id="KW-0808">Transferase</keyword>
<organism>
    <name type="scientific">Clostridium novyi (strain NT)</name>
    <dbReference type="NCBI Taxonomy" id="386415"/>
    <lineage>
        <taxon>Bacteria</taxon>
        <taxon>Bacillati</taxon>
        <taxon>Bacillota</taxon>
        <taxon>Clostridia</taxon>
        <taxon>Eubacteriales</taxon>
        <taxon>Clostridiaceae</taxon>
        <taxon>Clostridium</taxon>
    </lineage>
</organism>